<protein>
    <recommendedName>
        <fullName evidence="1">Uronate isomerase</fullName>
        <ecNumber evidence="1">5.3.1.12</ecNumber>
    </recommendedName>
    <alternativeName>
        <fullName evidence="1">Glucuronate isomerase</fullName>
    </alternativeName>
    <alternativeName>
        <fullName evidence="1">Uronic isomerase</fullName>
    </alternativeName>
</protein>
<proteinExistence type="inferred from homology"/>
<sequence length="472" mass="52923">MRSSVLSLHPDRLLPADPGTRAIARRLYAQVATLPIISPHGHTDPAWFATNAPFANATELLLVPDHYVFRMLYSQGIDLDALGIPRADGTRAAVDPRAAWRVFAEHYTLLRGTPSALWLNHVFHDVFDLRIRLDAGTADHYYDHITAALQTPAFLPRALFERFNIEVIATTESPLDRLQHHAAIAASGWQGRVVTAYRPDPVVDPEHEQFAGALQQFGALTGEDVLSWDGYLRAHRQRRAFFAAHGATSTDHGHPSAATADLSPVQAQRLFDTVVRGEATPEQAELFRAQVLTEMAAMSLDDGLVMQLHPGCFRNHNRQLFEQYGRDKGADIPMRTDYVHALKPLLDRHGNDPRLRLIVFTLDETSYSRELAPLAGHYPSLLLGPAWWFHDAPEGMWRFREQTLASAGFYNTVGFNDDTRAFLSIPARHDVARRVDSAFLAKLVAEHRLEEDEATEVAIDLAYRLPKQAYNL</sequence>
<organism>
    <name type="scientific">Xanthomonas euvesicatoria pv. vesicatoria (strain 85-10)</name>
    <name type="common">Xanthomonas campestris pv. vesicatoria</name>
    <dbReference type="NCBI Taxonomy" id="316273"/>
    <lineage>
        <taxon>Bacteria</taxon>
        <taxon>Pseudomonadati</taxon>
        <taxon>Pseudomonadota</taxon>
        <taxon>Gammaproteobacteria</taxon>
        <taxon>Lysobacterales</taxon>
        <taxon>Lysobacteraceae</taxon>
        <taxon>Xanthomonas</taxon>
    </lineage>
</organism>
<keyword id="KW-0413">Isomerase</keyword>
<dbReference type="EC" id="5.3.1.12" evidence="1"/>
<dbReference type="EMBL" id="AM039952">
    <property type="protein sequence ID" value="CAJ26088.1"/>
    <property type="molecule type" value="Genomic_DNA"/>
</dbReference>
<dbReference type="RefSeq" id="WP_011349107.1">
    <property type="nucleotide sequence ID" value="NZ_CP017190.1"/>
</dbReference>
<dbReference type="SMR" id="Q3BMC5"/>
<dbReference type="STRING" id="456327.BJD11_23630"/>
<dbReference type="KEGG" id="xcv:XCV4357"/>
<dbReference type="eggNOG" id="COG1904">
    <property type="taxonomic scope" value="Bacteria"/>
</dbReference>
<dbReference type="HOGENOM" id="CLU_044465_0_0_6"/>
<dbReference type="UniPathway" id="UPA00246"/>
<dbReference type="Proteomes" id="UP000007069">
    <property type="component" value="Chromosome"/>
</dbReference>
<dbReference type="GO" id="GO:0008880">
    <property type="term" value="F:glucuronate isomerase activity"/>
    <property type="evidence" value="ECO:0007669"/>
    <property type="project" value="UniProtKB-UniRule"/>
</dbReference>
<dbReference type="GO" id="GO:0019698">
    <property type="term" value="P:D-galacturonate catabolic process"/>
    <property type="evidence" value="ECO:0007669"/>
    <property type="project" value="TreeGrafter"/>
</dbReference>
<dbReference type="GO" id="GO:0042840">
    <property type="term" value="P:D-glucuronate catabolic process"/>
    <property type="evidence" value="ECO:0007669"/>
    <property type="project" value="TreeGrafter"/>
</dbReference>
<dbReference type="Gene3D" id="3.20.20.140">
    <property type="entry name" value="Metal-dependent hydrolases"/>
    <property type="match status" value="1"/>
</dbReference>
<dbReference type="Gene3D" id="1.10.2020.10">
    <property type="entry name" value="uronate isomerase, domain 2, chain A"/>
    <property type="match status" value="1"/>
</dbReference>
<dbReference type="HAMAP" id="MF_00675">
    <property type="entry name" value="UxaC"/>
    <property type="match status" value="1"/>
</dbReference>
<dbReference type="InterPro" id="IPR032466">
    <property type="entry name" value="Metal_Hydrolase"/>
</dbReference>
<dbReference type="InterPro" id="IPR003766">
    <property type="entry name" value="Uronate_isomerase"/>
</dbReference>
<dbReference type="NCBIfam" id="NF002794">
    <property type="entry name" value="PRK02925.1"/>
    <property type="match status" value="1"/>
</dbReference>
<dbReference type="PANTHER" id="PTHR30068">
    <property type="entry name" value="URONATE ISOMERASE"/>
    <property type="match status" value="1"/>
</dbReference>
<dbReference type="PANTHER" id="PTHR30068:SF4">
    <property type="entry name" value="URONATE ISOMERASE"/>
    <property type="match status" value="1"/>
</dbReference>
<dbReference type="Pfam" id="PF02614">
    <property type="entry name" value="UxaC"/>
    <property type="match status" value="1"/>
</dbReference>
<dbReference type="SUPFAM" id="SSF51556">
    <property type="entry name" value="Metallo-dependent hydrolases"/>
    <property type="match status" value="1"/>
</dbReference>
<evidence type="ECO:0000255" key="1">
    <source>
        <dbReference type="HAMAP-Rule" id="MF_00675"/>
    </source>
</evidence>
<reference key="1">
    <citation type="journal article" date="2005" name="J. Bacteriol.">
        <title>Insights into genome plasticity and pathogenicity of the plant pathogenic Bacterium Xanthomonas campestris pv. vesicatoria revealed by the complete genome sequence.</title>
        <authorList>
            <person name="Thieme F."/>
            <person name="Koebnik R."/>
            <person name="Bekel T."/>
            <person name="Berger C."/>
            <person name="Boch J."/>
            <person name="Buettner D."/>
            <person name="Caldana C."/>
            <person name="Gaigalat L."/>
            <person name="Goesmann A."/>
            <person name="Kay S."/>
            <person name="Kirchner O."/>
            <person name="Lanz C."/>
            <person name="Linke B."/>
            <person name="McHardy A.C."/>
            <person name="Meyer F."/>
            <person name="Mittenhuber G."/>
            <person name="Nies D.H."/>
            <person name="Niesbach-Kloesgen U."/>
            <person name="Patschkowski T."/>
            <person name="Rueckert C."/>
            <person name="Rupp O."/>
            <person name="Schneiker S."/>
            <person name="Schuster S.C."/>
            <person name="Vorhoelter F.J."/>
            <person name="Weber E."/>
            <person name="Puehler A."/>
            <person name="Bonas U."/>
            <person name="Bartels D."/>
            <person name="Kaiser O."/>
        </authorList>
    </citation>
    <scope>NUCLEOTIDE SEQUENCE [LARGE SCALE GENOMIC DNA]</scope>
    <source>
        <strain>85-10</strain>
    </source>
</reference>
<name>UXAC_XANE5</name>
<comment type="catalytic activity">
    <reaction evidence="1">
        <text>D-glucuronate = D-fructuronate</text>
        <dbReference type="Rhea" id="RHEA:13049"/>
        <dbReference type="ChEBI" id="CHEBI:58720"/>
        <dbReference type="ChEBI" id="CHEBI:59863"/>
        <dbReference type="EC" id="5.3.1.12"/>
    </reaction>
</comment>
<comment type="catalytic activity">
    <reaction evidence="1">
        <text>aldehydo-D-galacturonate = keto-D-tagaturonate</text>
        <dbReference type="Rhea" id="RHEA:27702"/>
        <dbReference type="ChEBI" id="CHEBI:12952"/>
        <dbReference type="ChEBI" id="CHEBI:17886"/>
        <dbReference type="EC" id="5.3.1.12"/>
    </reaction>
</comment>
<comment type="pathway">
    <text evidence="1">Carbohydrate metabolism; pentose and glucuronate interconversion.</text>
</comment>
<comment type="similarity">
    <text evidence="1">Belongs to the metallo-dependent hydrolases superfamily. Uronate isomerase family.</text>
</comment>
<accession>Q3BMC5</accession>
<gene>
    <name evidence="1" type="primary">uxaC</name>
    <name type="ordered locus">XCV4357</name>
</gene>
<feature type="chain" id="PRO_1000131613" description="Uronate isomerase">
    <location>
        <begin position="1"/>
        <end position="472"/>
    </location>
</feature>